<sequence length="86" mass="9722">MKTLLLTLVVVTIVCLDLGYTLTCLICPERYCQKVHTCRGEEKLCVKRFYDEKALGWRAKRGCAATCPEAKPKETVECCSTDKCNK</sequence>
<name>3NO28_BUNFA</name>
<protein>
    <recommendedName>
        <fullName>Neurotoxin 3FTx-8a</fullName>
    </recommendedName>
    <alternativeName>
        <fullName>3FTx-VIIIa</fullName>
    </alternativeName>
</protein>
<keyword id="KW-0008">Acetylcholine receptor inhibiting toxin</keyword>
<keyword id="KW-0903">Direct protein sequencing</keyword>
<keyword id="KW-1015">Disulfide bond</keyword>
<keyword id="KW-0872">Ion channel impairing toxin</keyword>
<keyword id="KW-0528">Neurotoxin</keyword>
<keyword id="KW-0629">Postsynaptic neurotoxin</keyword>
<keyword id="KW-0964">Secreted</keyword>
<keyword id="KW-0732">Signal</keyword>
<keyword id="KW-0800">Toxin</keyword>
<proteinExistence type="evidence at protein level"/>
<reference key="1">
    <citation type="journal article" date="2007" name="FEBS J.">
        <title>Sequences, geographic variations and molecular phylogeny of venom phospholipases and three-finger toxins of eastern India Bungarus fasciatus and kinetic analyses of its Pro31 phospholipases A2.</title>
        <authorList>
            <person name="Tsai I.-H."/>
            <person name="Tsai H.-Y."/>
            <person name="Saha A."/>
            <person name="Gomes A."/>
        </authorList>
    </citation>
    <scope>NUCLEOTIDE SEQUENCE [MRNA]</scope>
    <scope>PROTEIN SEQUENCE OF 22-39</scope>
    <scope>MASS SPECTROMETRY</scope>
    <scope>SUBCELLULAR LOCATION</scope>
    <source>
        <tissue>Venom</tissue>
        <tissue>Venom gland</tissue>
    </source>
</reference>
<comment type="function">
    <text evidence="1">Binds with low affinity to muscular (alpha-1-beta-1-delta-epsilon/CHRNA1-CHRNB1-CHRND-CHRNE) and very low affinity to neuronal (alpha-7/CHRNA7) nicotinic acetylcholine receptor (nAChR).</text>
</comment>
<comment type="subcellular location">
    <subcellularLocation>
        <location evidence="3">Secreted</location>
    </subcellularLocation>
</comment>
<comment type="tissue specificity">
    <text evidence="4">Expressed by the venom gland.</text>
</comment>
<comment type="mass spectrometry" mass="7420.0" error="1.0" method="Electrospray" evidence="3"/>
<comment type="similarity">
    <text evidence="4">Belongs to the three-finger toxin family. Ancestral subfamily. Orphan group II sub-subfamily.</text>
</comment>
<accession>A2CKF6</accession>
<feature type="signal peptide" evidence="3">
    <location>
        <begin position="1"/>
        <end position="21"/>
    </location>
</feature>
<feature type="chain" id="PRO_0000293102" description="Neurotoxin 3FTx-8a" evidence="5">
    <location>
        <begin position="22"/>
        <end position="86"/>
    </location>
</feature>
<feature type="disulfide bond" evidence="2">
    <location>
        <begin position="24"/>
        <end position="45"/>
    </location>
</feature>
<feature type="disulfide bond" evidence="2">
    <location>
        <begin position="27"/>
        <end position="32"/>
    </location>
</feature>
<feature type="disulfide bond" evidence="2">
    <location>
        <begin position="38"/>
        <end position="63"/>
    </location>
</feature>
<feature type="disulfide bond" evidence="2">
    <location>
        <begin position="67"/>
        <end position="78"/>
    </location>
</feature>
<feature type="disulfide bond" evidence="2">
    <location>
        <begin position="79"/>
        <end position="84"/>
    </location>
</feature>
<organism>
    <name type="scientific">Bungarus fasciatus</name>
    <name type="common">Banded krait</name>
    <name type="synonym">Pseudoboa fasciata</name>
    <dbReference type="NCBI Taxonomy" id="8613"/>
    <lineage>
        <taxon>Eukaryota</taxon>
        <taxon>Metazoa</taxon>
        <taxon>Chordata</taxon>
        <taxon>Craniata</taxon>
        <taxon>Vertebrata</taxon>
        <taxon>Euteleostomi</taxon>
        <taxon>Lepidosauria</taxon>
        <taxon>Squamata</taxon>
        <taxon>Bifurcata</taxon>
        <taxon>Unidentata</taxon>
        <taxon>Episquamata</taxon>
        <taxon>Toxicofera</taxon>
        <taxon>Serpentes</taxon>
        <taxon>Colubroidea</taxon>
        <taxon>Elapidae</taxon>
        <taxon>Bungarinae</taxon>
        <taxon>Bungarus</taxon>
    </lineage>
</organism>
<dbReference type="EMBL" id="DQ835582">
    <property type="protein sequence ID" value="ABI33870.1"/>
    <property type="molecule type" value="mRNA"/>
</dbReference>
<dbReference type="SMR" id="A2CKF6"/>
<dbReference type="GO" id="GO:0005576">
    <property type="term" value="C:extracellular region"/>
    <property type="evidence" value="ECO:0007669"/>
    <property type="project" value="UniProtKB-SubCell"/>
</dbReference>
<dbReference type="GO" id="GO:0030550">
    <property type="term" value="F:acetylcholine receptor inhibitor activity"/>
    <property type="evidence" value="ECO:0007669"/>
    <property type="project" value="UniProtKB-KW"/>
</dbReference>
<dbReference type="GO" id="GO:0099106">
    <property type="term" value="F:ion channel regulator activity"/>
    <property type="evidence" value="ECO:0007669"/>
    <property type="project" value="UniProtKB-KW"/>
</dbReference>
<dbReference type="GO" id="GO:0090729">
    <property type="term" value="F:toxin activity"/>
    <property type="evidence" value="ECO:0007669"/>
    <property type="project" value="UniProtKB-KW"/>
</dbReference>
<dbReference type="CDD" id="cd00206">
    <property type="entry name" value="TFP_snake_toxin"/>
    <property type="match status" value="1"/>
</dbReference>
<dbReference type="FunFam" id="2.10.60.10:FF:000024">
    <property type="entry name" value="Cytotoxin 1"/>
    <property type="match status" value="1"/>
</dbReference>
<dbReference type="Gene3D" id="2.10.60.10">
    <property type="entry name" value="CD59"/>
    <property type="match status" value="1"/>
</dbReference>
<dbReference type="InterPro" id="IPR003571">
    <property type="entry name" value="Snake_3FTx"/>
</dbReference>
<dbReference type="InterPro" id="IPR045860">
    <property type="entry name" value="Snake_toxin-like_sf"/>
</dbReference>
<dbReference type="InterPro" id="IPR018354">
    <property type="entry name" value="Snake_toxin_con_site"/>
</dbReference>
<dbReference type="InterPro" id="IPR054131">
    <property type="entry name" value="Toxin_cobra-type"/>
</dbReference>
<dbReference type="Pfam" id="PF21947">
    <property type="entry name" value="Toxin_cobra-type"/>
    <property type="match status" value="1"/>
</dbReference>
<dbReference type="SUPFAM" id="SSF57302">
    <property type="entry name" value="Snake toxin-like"/>
    <property type="match status" value="1"/>
</dbReference>
<dbReference type="PROSITE" id="PS00272">
    <property type="entry name" value="SNAKE_TOXIN"/>
    <property type="match status" value="1"/>
</dbReference>
<evidence type="ECO:0000250" key="1">
    <source>
        <dbReference type="UniProtKB" id="O42255"/>
    </source>
</evidence>
<evidence type="ECO:0000250" key="2">
    <source>
        <dbReference type="UniProtKB" id="Q8AY51"/>
    </source>
</evidence>
<evidence type="ECO:0000269" key="3">
    <source>
    </source>
</evidence>
<evidence type="ECO:0000305" key="4"/>
<evidence type="ECO:0000305" key="5">
    <source>
    </source>
</evidence>